<protein>
    <recommendedName>
        <fullName evidence="1">Large ribosomal subunit protein uL5</fullName>
    </recommendedName>
    <alternativeName>
        <fullName evidence="2">50S ribosomal protein L5</fullName>
    </alternativeName>
</protein>
<organism>
    <name type="scientific">Methanoregula boonei (strain DSM 21154 / JCM 14090 / 6A8)</name>
    <dbReference type="NCBI Taxonomy" id="456442"/>
    <lineage>
        <taxon>Archaea</taxon>
        <taxon>Methanobacteriati</taxon>
        <taxon>Methanobacteriota</taxon>
        <taxon>Stenosarchaea group</taxon>
        <taxon>Methanomicrobia</taxon>
        <taxon>Methanomicrobiales</taxon>
        <taxon>Methanoregulaceae</taxon>
        <taxon>Methanoregula</taxon>
    </lineage>
</organism>
<proteinExistence type="inferred from homology"/>
<name>RL5_METB6</name>
<keyword id="KW-1185">Reference proteome</keyword>
<keyword id="KW-0687">Ribonucleoprotein</keyword>
<keyword id="KW-0689">Ribosomal protein</keyword>
<keyword id="KW-0694">RNA-binding</keyword>
<keyword id="KW-0699">rRNA-binding</keyword>
<keyword id="KW-0820">tRNA-binding</keyword>
<dbReference type="EMBL" id="CP000780">
    <property type="protein sequence ID" value="ABS55063.1"/>
    <property type="molecule type" value="Genomic_DNA"/>
</dbReference>
<dbReference type="RefSeq" id="WP_012106084.1">
    <property type="nucleotide sequence ID" value="NC_009712.1"/>
</dbReference>
<dbReference type="SMR" id="A7I5Q2"/>
<dbReference type="STRING" id="456442.Mboo_0545"/>
<dbReference type="GeneID" id="5412239"/>
<dbReference type="KEGG" id="mbn:Mboo_0545"/>
<dbReference type="eggNOG" id="arCOG04092">
    <property type="taxonomic scope" value="Archaea"/>
</dbReference>
<dbReference type="HOGENOM" id="CLU_061015_3_0_2"/>
<dbReference type="OrthoDB" id="372044at2157"/>
<dbReference type="Proteomes" id="UP000002408">
    <property type="component" value="Chromosome"/>
</dbReference>
<dbReference type="GO" id="GO:1990904">
    <property type="term" value="C:ribonucleoprotein complex"/>
    <property type="evidence" value="ECO:0007669"/>
    <property type="project" value="UniProtKB-KW"/>
</dbReference>
<dbReference type="GO" id="GO:0005840">
    <property type="term" value="C:ribosome"/>
    <property type="evidence" value="ECO:0007669"/>
    <property type="project" value="UniProtKB-KW"/>
</dbReference>
<dbReference type="GO" id="GO:0019843">
    <property type="term" value="F:rRNA binding"/>
    <property type="evidence" value="ECO:0007669"/>
    <property type="project" value="UniProtKB-UniRule"/>
</dbReference>
<dbReference type="GO" id="GO:0003735">
    <property type="term" value="F:structural constituent of ribosome"/>
    <property type="evidence" value="ECO:0007669"/>
    <property type="project" value="InterPro"/>
</dbReference>
<dbReference type="GO" id="GO:0000049">
    <property type="term" value="F:tRNA binding"/>
    <property type="evidence" value="ECO:0007669"/>
    <property type="project" value="UniProtKB-UniRule"/>
</dbReference>
<dbReference type="GO" id="GO:0006412">
    <property type="term" value="P:translation"/>
    <property type="evidence" value="ECO:0007669"/>
    <property type="project" value="UniProtKB-UniRule"/>
</dbReference>
<dbReference type="FunFam" id="3.30.1440.10:FF:000002">
    <property type="entry name" value="60S ribosomal protein L11"/>
    <property type="match status" value="1"/>
</dbReference>
<dbReference type="Gene3D" id="3.30.1440.10">
    <property type="match status" value="1"/>
</dbReference>
<dbReference type="HAMAP" id="MF_01333_A">
    <property type="entry name" value="Ribosomal_uL5_A"/>
    <property type="match status" value="1"/>
</dbReference>
<dbReference type="InterPro" id="IPR002132">
    <property type="entry name" value="Ribosomal_uL5"/>
</dbReference>
<dbReference type="InterPro" id="IPR022804">
    <property type="entry name" value="Ribosomal_uL5_arc"/>
</dbReference>
<dbReference type="InterPro" id="IPR031309">
    <property type="entry name" value="Ribosomal_uL5_C"/>
</dbReference>
<dbReference type="InterPro" id="IPR022803">
    <property type="entry name" value="Ribosomal_uL5_dom_sf"/>
</dbReference>
<dbReference type="InterPro" id="IPR031310">
    <property type="entry name" value="Ribosomal_uL5_N"/>
</dbReference>
<dbReference type="NCBIfam" id="NF003258">
    <property type="entry name" value="PRK04219.1"/>
    <property type="match status" value="1"/>
</dbReference>
<dbReference type="PANTHER" id="PTHR11994">
    <property type="entry name" value="60S RIBOSOMAL PROTEIN L11-RELATED"/>
    <property type="match status" value="1"/>
</dbReference>
<dbReference type="Pfam" id="PF00281">
    <property type="entry name" value="Ribosomal_L5"/>
    <property type="match status" value="1"/>
</dbReference>
<dbReference type="Pfam" id="PF00673">
    <property type="entry name" value="Ribosomal_L5_C"/>
    <property type="match status" value="1"/>
</dbReference>
<dbReference type="PIRSF" id="PIRSF002161">
    <property type="entry name" value="Ribosomal_L5"/>
    <property type="match status" value="1"/>
</dbReference>
<dbReference type="SUPFAM" id="SSF55282">
    <property type="entry name" value="RL5-like"/>
    <property type="match status" value="1"/>
</dbReference>
<sequence>MRDVHIDKVVVHMGVGESGEKLVKAENIMKTITKQTPIRSVAKMTQPAFNIRKGAPIGCKVTLRGKPAEDFIKTSLNIVNKTIFESQFDKSGNFSFGIEEHTDFPGMSYDPQIGIFGMDINVVLERNGIRITRRRMQKKKLPEKQRVKKEDAIAFLKKEYSVEVR</sequence>
<feature type="chain" id="PRO_0000365644" description="Large ribosomal subunit protein uL5">
    <location>
        <begin position="1"/>
        <end position="165"/>
    </location>
</feature>
<accession>A7I5Q2</accession>
<reference key="1">
    <citation type="journal article" date="2015" name="Microbiology">
        <title>Genome of Methanoregula boonei 6A8 reveals adaptations to oligotrophic peatland environments.</title>
        <authorList>
            <person name="Braeuer S."/>
            <person name="Cadillo-Quiroz H."/>
            <person name="Kyrpides N."/>
            <person name="Woyke T."/>
            <person name="Goodwin L."/>
            <person name="Detter C."/>
            <person name="Podell S."/>
            <person name="Yavitt J.B."/>
            <person name="Zinder S.H."/>
        </authorList>
    </citation>
    <scope>NUCLEOTIDE SEQUENCE [LARGE SCALE GENOMIC DNA]</scope>
    <source>
        <strain>DSM 21154 / JCM 14090 / 6A8</strain>
    </source>
</reference>
<comment type="function">
    <text evidence="1">This is one of the proteins that bind and probably mediate the attachment of the 5S RNA into the large ribosomal subunit, where it forms part of the central protuberance. In the 70S ribosome it contacts protein S13 of the 30S subunit (bridge B1b), connecting the 2 subunits; this bridge is implicated in subunit movement. May contact the P site tRNA; the 5S rRNA and some of its associated proteins might help stabilize positioning of ribosome-bound tRNAs.</text>
</comment>
<comment type="subunit">
    <text evidence="1">Part of the 50S ribosomal subunit; contacts the 5S rRNA and probably tRNA. Forms a bridge to the 30S subunit in the 70S ribosome.</text>
</comment>
<comment type="similarity">
    <text evidence="1">Belongs to the universal ribosomal protein uL5 family.</text>
</comment>
<gene>
    <name evidence="1" type="primary">rpl5</name>
    <name type="ordered locus">Mboo_0545</name>
</gene>
<evidence type="ECO:0000255" key="1">
    <source>
        <dbReference type="HAMAP-Rule" id="MF_01333"/>
    </source>
</evidence>
<evidence type="ECO:0000305" key="2"/>